<comment type="function">
    <text evidence="1">One of the primary rRNA binding proteins, it binds directly to 16S rRNA where it nucleates assembly of the body of the 30S subunit.</text>
</comment>
<comment type="function">
    <text evidence="1">With S5 and S12 plays an important role in translational accuracy.</text>
</comment>
<comment type="subunit">
    <text evidence="1">Part of the 30S ribosomal subunit. Contacts protein S5. The interaction surface between S4 and S5 is involved in control of translational fidelity.</text>
</comment>
<comment type="similarity">
    <text evidence="1">Belongs to the universal ribosomal protein uS4 family.</text>
</comment>
<name>RS4_MICAN</name>
<evidence type="ECO:0000255" key="1">
    <source>
        <dbReference type="HAMAP-Rule" id="MF_01306"/>
    </source>
</evidence>
<evidence type="ECO:0000256" key="2">
    <source>
        <dbReference type="SAM" id="MobiDB-lite"/>
    </source>
</evidence>
<evidence type="ECO:0000305" key="3"/>
<keyword id="KW-0687">Ribonucleoprotein</keyword>
<keyword id="KW-0689">Ribosomal protein</keyword>
<keyword id="KW-0694">RNA-binding</keyword>
<keyword id="KW-0699">rRNA-binding</keyword>
<sequence>MSRYRGPRLRVVRRLGELPGLTRKNARRAYAPGQHGQARKKRSEYAIRLEEKQKLRFNYGVSEKQLIRYVRKARRATGSTGQVLLQLLEMRLDNTVFRLGMAGTIPGARQLVNHGHVTVNGRVVDIASYQCRPGDVIGVRNQERSQDLVKRNMEYPGLANLPSHLEFDKNTLVGKVNGVVEREWIALSINELLVVEYYSRKV</sequence>
<accession>B0JLP1</accession>
<protein>
    <recommendedName>
        <fullName evidence="1">Small ribosomal subunit protein uS4</fullName>
    </recommendedName>
    <alternativeName>
        <fullName evidence="3">30S ribosomal protein S4</fullName>
    </alternativeName>
</protein>
<organism>
    <name type="scientific">Microcystis aeruginosa (strain NIES-843 / IAM M-2473)</name>
    <dbReference type="NCBI Taxonomy" id="449447"/>
    <lineage>
        <taxon>Bacteria</taxon>
        <taxon>Bacillati</taxon>
        <taxon>Cyanobacteriota</taxon>
        <taxon>Cyanophyceae</taxon>
        <taxon>Oscillatoriophycideae</taxon>
        <taxon>Chroococcales</taxon>
        <taxon>Microcystaceae</taxon>
        <taxon>Microcystis</taxon>
    </lineage>
</organism>
<gene>
    <name evidence="1" type="primary">rpsD</name>
    <name evidence="1" type="synonym">rps4</name>
    <name type="ordered locus">MAE_32430</name>
</gene>
<feature type="chain" id="PRO_1000085979" description="Small ribosomal subunit protein uS4">
    <location>
        <begin position="1"/>
        <end position="202"/>
    </location>
</feature>
<feature type="domain" description="S4 RNA-binding" evidence="1">
    <location>
        <begin position="90"/>
        <end position="153"/>
    </location>
</feature>
<feature type="region of interest" description="Disordered" evidence="2">
    <location>
        <begin position="23"/>
        <end position="42"/>
    </location>
</feature>
<proteinExistence type="inferred from homology"/>
<reference key="1">
    <citation type="journal article" date="2007" name="DNA Res.">
        <title>Complete genomic structure of the bloom-forming toxic cyanobacterium Microcystis aeruginosa NIES-843.</title>
        <authorList>
            <person name="Kaneko T."/>
            <person name="Nakajima N."/>
            <person name="Okamoto S."/>
            <person name="Suzuki I."/>
            <person name="Tanabe Y."/>
            <person name="Tamaoki M."/>
            <person name="Nakamura Y."/>
            <person name="Kasai F."/>
            <person name="Watanabe A."/>
            <person name="Kawashima K."/>
            <person name="Kishida Y."/>
            <person name="Ono A."/>
            <person name="Shimizu Y."/>
            <person name="Takahashi C."/>
            <person name="Minami C."/>
            <person name="Fujishiro T."/>
            <person name="Kohara M."/>
            <person name="Katoh M."/>
            <person name="Nakazaki N."/>
            <person name="Nakayama S."/>
            <person name="Yamada M."/>
            <person name="Tabata S."/>
            <person name="Watanabe M.M."/>
        </authorList>
    </citation>
    <scope>NUCLEOTIDE SEQUENCE [LARGE SCALE GENOMIC DNA]</scope>
    <source>
        <strain>NIES-843 / IAM M-247</strain>
    </source>
</reference>
<dbReference type="EMBL" id="AP009552">
    <property type="protein sequence ID" value="BAG03065.1"/>
    <property type="molecule type" value="Genomic_DNA"/>
</dbReference>
<dbReference type="RefSeq" id="WP_002798058.1">
    <property type="nucleotide sequence ID" value="NC_010296.1"/>
</dbReference>
<dbReference type="SMR" id="B0JLP1"/>
<dbReference type="STRING" id="449447.MAE_32430"/>
<dbReference type="PaxDb" id="449447-MAE_32430"/>
<dbReference type="EnsemblBacteria" id="BAG03065">
    <property type="protein sequence ID" value="BAG03065"/>
    <property type="gene ID" value="MAE_32430"/>
</dbReference>
<dbReference type="GeneID" id="66707357"/>
<dbReference type="KEGG" id="mar:MAE_32430"/>
<dbReference type="eggNOG" id="COG0522">
    <property type="taxonomic scope" value="Bacteria"/>
</dbReference>
<dbReference type="HOGENOM" id="CLU_092403_0_5_3"/>
<dbReference type="BioCyc" id="MAER449447:MAE_RS14040-MONOMER"/>
<dbReference type="Proteomes" id="UP000001510">
    <property type="component" value="Chromosome"/>
</dbReference>
<dbReference type="GO" id="GO:0015935">
    <property type="term" value="C:small ribosomal subunit"/>
    <property type="evidence" value="ECO:0007669"/>
    <property type="project" value="InterPro"/>
</dbReference>
<dbReference type="GO" id="GO:0019843">
    <property type="term" value="F:rRNA binding"/>
    <property type="evidence" value="ECO:0007669"/>
    <property type="project" value="UniProtKB-UniRule"/>
</dbReference>
<dbReference type="GO" id="GO:0003735">
    <property type="term" value="F:structural constituent of ribosome"/>
    <property type="evidence" value="ECO:0007669"/>
    <property type="project" value="InterPro"/>
</dbReference>
<dbReference type="GO" id="GO:0042274">
    <property type="term" value="P:ribosomal small subunit biogenesis"/>
    <property type="evidence" value="ECO:0007669"/>
    <property type="project" value="TreeGrafter"/>
</dbReference>
<dbReference type="GO" id="GO:0006412">
    <property type="term" value="P:translation"/>
    <property type="evidence" value="ECO:0007669"/>
    <property type="project" value="UniProtKB-UniRule"/>
</dbReference>
<dbReference type="CDD" id="cd00165">
    <property type="entry name" value="S4"/>
    <property type="match status" value="1"/>
</dbReference>
<dbReference type="FunFam" id="3.10.290.10:FF:000001">
    <property type="entry name" value="30S ribosomal protein S4"/>
    <property type="match status" value="1"/>
</dbReference>
<dbReference type="FunFam" id="1.10.1050.10:FF:000002">
    <property type="entry name" value="30S ribosomal protein S4, chloroplastic"/>
    <property type="match status" value="1"/>
</dbReference>
<dbReference type="Gene3D" id="1.10.1050.10">
    <property type="entry name" value="Ribosomal Protein S4 Delta 41, Chain A, domain 1"/>
    <property type="match status" value="1"/>
</dbReference>
<dbReference type="Gene3D" id="3.10.290.10">
    <property type="entry name" value="RNA-binding S4 domain"/>
    <property type="match status" value="1"/>
</dbReference>
<dbReference type="HAMAP" id="MF_01306_B">
    <property type="entry name" value="Ribosomal_uS4_B"/>
    <property type="match status" value="1"/>
</dbReference>
<dbReference type="InterPro" id="IPR022801">
    <property type="entry name" value="Ribosomal_uS4"/>
</dbReference>
<dbReference type="InterPro" id="IPR005709">
    <property type="entry name" value="Ribosomal_uS4_bac-type"/>
</dbReference>
<dbReference type="InterPro" id="IPR018079">
    <property type="entry name" value="Ribosomal_uS4_CS"/>
</dbReference>
<dbReference type="InterPro" id="IPR001912">
    <property type="entry name" value="Ribosomal_uS4_N"/>
</dbReference>
<dbReference type="InterPro" id="IPR002942">
    <property type="entry name" value="S4_RNA-bd"/>
</dbReference>
<dbReference type="InterPro" id="IPR036986">
    <property type="entry name" value="S4_RNA-bd_sf"/>
</dbReference>
<dbReference type="NCBIfam" id="NF003717">
    <property type="entry name" value="PRK05327.1"/>
    <property type="match status" value="1"/>
</dbReference>
<dbReference type="NCBIfam" id="TIGR01017">
    <property type="entry name" value="rpsD_bact"/>
    <property type="match status" value="1"/>
</dbReference>
<dbReference type="PANTHER" id="PTHR11831">
    <property type="entry name" value="30S 40S RIBOSOMAL PROTEIN"/>
    <property type="match status" value="1"/>
</dbReference>
<dbReference type="PANTHER" id="PTHR11831:SF4">
    <property type="entry name" value="SMALL RIBOSOMAL SUBUNIT PROTEIN US4M"/>
    <property type="match status" value="1"/>
</dbReference>
<dbReference type="Pfam" id="PF00163">
    <property type="entry name" value="Ribosomal_S4"/>
    <property type="match status" value="1"/>
</dbReference>
<dbReference type="Pfam" id="PF01479">
    <property type="entry name" value="S4"/>
    <property type="match status" value="1"/>
</dbReference>
<dbReference type="SMART" id="SM01390">
    <property type="entry name" value="Ribosomal_S4"/>
    <property type="match status" value="1"/>
</dbReference>
<dbReference type="SMART" id="SM00363">
    <property type="entry name" value="S4"/>
    <property type="match status" value="1"/>
</dbReference>
<dbReference type="SUPFAM" id="SSF55174">
    <property type="entry name" value="Alpha-L RNA-binding motif"/>
    <property type="match status" value="1"/>
</dbReference>
<dbReference type="PROSITE" id="PS00632">
    <property type="entry name" value="RIBOSOMAL_S4"/>
    <property type="match status" value="1"/>
</dbReference>
<dbReference type="PROSITE" id="PS50889">
    <property type="entry name" value="S4"/>
    <property type="match status" value="1"/>
</dbReference>